<proteinExistence type="inferred from homology"/>
<name>RS20_RUMCH</name>
<comment type="function">
    <text evidence="1">Binds directly to 16S ribosomal RNA.</text>
</comment>
<comment type="similarity">
    <text evidence="1">Belongs to the bacterial ribosomal protein bS20 family.</text>
</comment>
<reference key="1">
    <citation type="submission" date="2009-01" db="EMBL/GenBank/DDBJ databases">
        <title>Complete sequence of Clostridium cellulolyticum H10.</title>
        <authorList>
            <consortium name="US DOE Joint Genome Institute"/>
            <person name="Lucas S."/>
            <person name="Copeland A."/>
            <person name="Lapidus A."/>
            <person name="Glavina del Rio T."/>
            <person name="Dalin E."/>
            <person name="Tice H."/>
            <person name="Bruce D."/>
            <person name="Goodwin L."/>
            <person name="Pitluck S."/>
            <person name="Chertkov O."/>
            <person name="Saunders E."/>
            <person name="Brettin T."/>
            <person name="Detter J.C."/>
            <person name="Han C."/>
            <person name="Larimer F."/>
            <person name="Land M."/>
            <person name="Hauser L."/>
            <person name="Kyrpides N."/>
            <person name="Ivanova N."/>
            <person name="Zhou J."/>
            <person name="Richardson P."/>
        </authorList>
    </citation>
    <scope>NUCLEOTIDE SEQUENCE [LARGE SCALE GENOMIC DNA]</scope>
    <source>
        <strain>ATCC 35319 / DSM 5812 / JCM 6584 / H10</strain>
    </source>
</reference>
<dbReference type="EMBL" id="CP001348">
    <property type="protein sequence ID" value="ACL76327.1"/>
    <property type="molecule type" value="Genomic_DNA"/>
</dbReference>
<dbReference type="RefSeq" id="WP_015925431.1">
    <property type="nucleotide sequence ID" value="NC_011898.1"/>
</dbReference>
<dbReference type="SMR" id="B8I3I4"/>
<dbReference type="STRING" id="394503.Ccel_1979"/>
<dbReference type="KEGG" id="cce:Ccel_1979"/>
<dbReference type="eggNOG" id="COG0268">
    <property type="taxonomic scope" value="Bacteria"/>
</dbReference>
<dbReference type="HOGENOM" id="CLU_160655_1_0_9"/>
<dbReference type="OrthoDB" id="9808392at2"/>
<dbReference type="Proteomes" id="UP000001349">
    <property type="component" value="Chromosome"/>
</dbReference>
<dbReference type="GO" id="GO:0005829">
    <property type="term" value="C:cytosol"/>
    <property type="evidence" value="ECO:0007669"/>
    <property type="project" value="TreeGrafter"/>
</dbReference>
<dbReference type="GO" id="GO:0015935">
    <property type="term" value="C:small ribosomal subunit"/>
    <property type="evidence" value="ECO:0007669"/>
    <property type="project" value="TreeGrafter"/>
</dbReference>
<dbReference type="GO" id="GO:0070181">
    <property type="term" value="F:small ribosomal subunit rRNA binding"/>
    <property type="evidence" value="ECO:0007669"/>
    <property type="project" value="TreeGrafter"/>
</dbReference>
<dbReference type="GO" id="GO:0003735">
    <property type="term" value="F:structural constituent of ribosome"/>
    <property type="evidence" value="ECO:0007669"/>
    <property type="project" value="InterPro"/>
</dbReference>
<dbReference type="GO" id="GO:0006412">
    <property type="term" value="P:translation"/>
    <property type="evidence" value="ECO:0007669"/>
    <property type="project" value="UniProtKB-UniRule"/>
</dbReference>
<dbReference type="FunFam" id="1.20.58.110:FF:000001">
    <property type="entry name" value="30S ribosomal protein S20"/>
    <property type="match status" value="1"/>
</dbReference>
<dbReference type="Gene3D" id="1.20.58.110">
    <property type="entry name" value="Ribosomal protein S20"/>
    <property type="match status" value="1"/>
</dbReference>
<dbReference type="HAMAP" id="MF_00500">
    <property type="entry name" value="Ribosomal_bS20"/>
    <property type="match status" value="1"/>
</dbReference>
<dbReference type="InterPro" id="IPR002583">
    <property type="entry name" value="Ribosomal_bS20"/>
</dbReference>
<dbReference type="InterPro" id="IPR036510">
    <property type="entry name" value="Ribosomal_bS20_sf"/>
</dbReference>
<dbReference type="NCBIfam" id="TIGR00029">
    <property type="entry name" value="S20"/>
    <property type="match status" value="1"/>
</dbReference>
<dbReference type="PANTHER" id="PTHR33398">
    <property type="entry name" value="30S RIBOSOMAL PROTEIN S20"/>
    <property type="match status" value="1"/>
</dbReference>
<dbReference type="PANTHER" id="PTHR33398:SF1">
    <property type="entry name" value="SMALL RIBOSOMAL SUBUNIT PROTEIN BS20C"/>
    <property type="match status" value="1"/>
</dbReference>
<dbReference type="Pfam" id="PF01649">
    <property type="entry name" value="Ribosomal_S20p"/>
    <property type="match status" value="1"/>
</dbReference>
<dbReference type="SUPFAM" id="SSF46992">
    <property type="entry name" value="Ribosomal protein S20"/>
    <property type="match status" value="1"/>
</dbReference>
<sequence>MPNIKSAIKRVKVNEAKTLENTIRKSALKTTIKKCKEAIVTGENTSDAYTAATKALDKAAAKNILHKNTAARKKSRLAKALNAAK</sequence>
<feature type="chain" id="PRO_1000194235" description="Small ribosomal subunit protein bS20">
    <location>
        <begin position="1"/>
        <end position="85"/>
    </location>
</feature>
<gene>
    <name evidence="1" type="primary">rpsT</name>
    <name type="ordered locus">Ccel_1979</name>
</gene>
<protein>
    <recommendedName>
        <fullName evidence="1">Small ribosomal subunit protein bS20</fullName>
    </recommendedName>
    <alternativeName>
        <fullName evidence="2">30S ribosomal protein S20</fullName>
    </alternativeName>
</protein>
<evidence type="ECO:0000255" key="1">
    <source>
        <dbReference type="HAMAP-Rule" id="MF_00500"/>
    </source>
</evidence>
<evidence type="ECO:0000305" key="2"/>
<accession>B8I3I4</accession>
<organism>
    <name type="scientific">Ruminiclostridium cellulolyticum (strain ATCC 35319 / DSM 5812 / JCM 6584 / H10)</name>
    <name type="common">Clostridium cellulolyticum</name>
    <dbReference type="NCBI Taxonomy" id="394503"/>
    <lineage>
        <taxon>Bacteria</taxon>
        <taxon>Bacillati</taxon>
        <taxon>Bacillota</taxon>
        <taxon>Clostridia</taxon>
        <taxon>Eubacteriales</taxon>
        <taxon>Oscillospiraceae</taxon>
        <taxon>Ruminiclostridium</taxon>
    </lineage>
</organism>
<keyword id="KW-1185">Reference proteome</keyword>
<keyword id="KW-0687">Ribonucleoprotein</keyword>
<keyword id="KW-0689">Ribosomal protein</keyword>
<keyword id="KW-0694">RNA-binding</keyword>
<keyword id="KW-0699">rRNA-binding</keyword>